<organism>
    <name type="scientific">Pseudomonas fluorescens (strain Pf0-1)</name>
    <dbReference type="NCBI Taxonomy" id="205922"/>
    <lineage>
        <taxon>Bacteria</taxon>
        <taxon>Pseudomonadati</taxon>
        <taxon>Pseudomonadota</taxon>
        <taxon>Gammaproteobacteria</taxon>
        <taxon>Pseudomonadales</taxon>
        <taxon>Pseudomonadaceae</taxon>
        <taxon>Pseudomonas</taxon>
    </lineage>
</organism>
<comment type="function">
    <text evidence="1">Required for disulfide bond formation in some periplasmic proteins. Acts by oxidizing the DsbA protein.</text>
</comment>
<comment type="subcellular location">
    <subcellularLocation>
        <location evidence="1">Cell inner membrane</location>
        <topology evidence="1">Multi-pass membrane protein</topology>
    </subcellularLocation>
</comment>
<comment type="similarity">
    <text evidence="1">Belongs to the DsbB family.</text>
</comment>
<dbReference type="EMBL" id="CP000094">
    <property type="protein sequence ID" value="ABA76387.1"/>
    <property type="molecule type" value="Genomic_DNA"/>
</dbReference>
<dbReference type="RefSeq" id="WP_007956723.1">
    <property type="nucleotide sequence ID" value="NC_007492.2"/>
</dbReference>
<dbReference type="SMR" id="Q3K767"/>
<dbReference type="KEGG" id="pfo:Pfl01_4650"/>
<dbReference type="eggNOG" id="COG1495">
    <property type="taxonomic scope" value="Bacteria"/>
</dbReference>
<dbReference type="HOGENOM" id="CLU_098660_1_0_6"/>
<dbReference type="Proteomes" id="UP000002704">
    <property type="component" value="Chromosome"/>
</dbReference>
<dbReference type="GO" id="GO:0005886">
    <property type="term" value="C:plasma membrane"/>
    <property type="evidence" value="ECO:0007669"/>
    <property type="project" value="UniProtKB-SubCell"/>
</dbReference>
<dbReference type="GO" id="GO:0009055">
    <property type="term" value="F:electron transfer activity"/>
    <property type="evidence" value="ECO:0007669"/>
    <property type="project" value="UniProtKB-UniRule"/>
</dbReference>
<dbReference type="GO" id="GO:0015035">
    <property type="term" value="F:protein-disulfide reductase activity"/>
    <property type="evidence" value="ECO:0007669"/>
    <property type="project" value="UniProtKB-UniRule"/>
</dbReference>
<dbReference type="GO" id="GO:0006457">
    <property type="term" value="P:protein folding"/>
    <property type="evidence" value="ECO:0007669"/>
    <property type="project" value="InterPro"/>
</dbReference>
<dbReference type="Gene3D" id="1.20.1550.10">
    <property type="entry name" value="DsbB-like"/>
    <property type="match status" value="1"/>
</dbReference>
<dbReference type="HAMAP" id="MF_00286">
    <property type="entry name" value="DsbB"/>
    <property type="match status" value="1"/>
</dbReference>
<dbReference type="InterPro" id="IPR003752">
    <property type="entry name" value="DiS_bond_form_DsbB/BdbC"/>
</dbReference>
<dbReference type="InterPro" id="IPR022920">
    <property type="entry name" value="Disulphide_bond_form_DsbB"/>
</dbReference>
<dbReference type="InterPro" id="IPR050183">
    <property type="entry name" value="DsbB"/>
</dbReference>
<dbReference type="InterPro" id="IPR023380">
    <property type="entry name" value="DsbB-like_sf"/>
</dbReference>
<dbReference type="NCBIfam" id="NF002552">
    <property type="entry name" value="PRK02110.1"/>
    <property type="match status" value="1"/>
</dbReference>
<dbReference type="PANTHER" id="PTHR36570">
    <property type="entry name" value="DISULFIDE BOND FORMATION PROTEIN B"/>
    <property type="match status" value="1"/>
</dbReference>
<dbReference type="PANTHER" id="PTHR36570:SF3">
    <property type="entry name" value="DISULFIDE BOND FORMATION PROTEIN B"/>
    <property type="match status" value="1"/>
</dbReference>
<dbReference type="Pfam" id="PF02600">
    <property type="entry name" value="DsbB"/>
    <property type="match status" value="1"/>
</dbReference>
<dbReference type="SUPFAM" id="SSF158442">
    <property type="entry name" value="DsbB-like"/>
    <property type="match status" value="1"/>
</dbReference>
<name>DSBB1_PSEPF</name>
<protein>
    <recommendedName>
        <fullName evidence="1">Disulfide bond formation protein B 1</fullName>
    </recommendedName>
    <alternativeName>
        <fullName evidence="1">Disulfide oxidoreductase 1</fullName>
    </alternativeName>
</protein>
<reference key="1">
    <citation type="journal article" date="2009" name="Genome Biol.">
        <title>Genomic and genetic analyses of diversity and plant interactions of Pseudomonas fluorescens.</title>
        <authorList>
            <person name="Silby M.W."/>
            <person name="Cerdeno-Tarraga A.M."/>
            <person name="Vernikos G.S."/>
            <person name="Giddens S.R."/>
            <person name="Jackson R.W."/>
            <person name="Preston G.M."/>
            <person name="Zhang X.-X."/>
            <person name="Moon C.D."/>
            <person name="Gehrig S.M."/>
            <person name="Godfrey S.A.C."/>
            <person name="Knight C.G."/>
            <person name="Malone J.G."/>
            <person name="Robinson Z."/>
            <person name="Spiers A.J."/>
            <person name="Harris S."/>
            <person name="Challis G.L."/>
            <person name="Yaxley A.M."/>
            <person name="Harris D."/>
            <person name="Seeger K."/>
            <person name="Murphy L."/>
            <person name="Rutter S."/>
            <person name="Squares R."/>
            <person name="Quail M.A."/>
            <person name="Saunders E."/>
            <person name="Mavromatis K."/>
            <person name="Brettin T.S."/>
            <person name="Bentley S.D."/>
            <person name="Hothersall J."/>
            <person name="Stephens E."/>
            <person name="Thomas C.M."/>
            <person name="Parkhill J."/>
            <person name="Levy S.B."/>
            <person name="Rainey P.B."/>
            <person name="Thomson N.R."/>
        </authorList>
    </citation>
    <scope>NUCLEOTIDE SEQUENCE [LARGE SCALE GENOMIC DNA]</scope>
    <source>
        <strain>Pf0-1</strain>
    </source>
</reference>
<keyword id="KW-0997">Cell inner membrane</keyword>
<keyword id="KW-1003">Cell membrane</keyword>
<keyword id="KW-0143">Chaperone</keyword>
<keyword id="KW-1015">Disulfide bond</keyword>
<keyword id="KW-0249">Electron transport</keyword>
<keyword id="KW-0472">Membrane</keyword>
<keyword id="KW-0560">Oxidoreductase</keyword>
<keyword id="KW-0676">Redox-active center</keyword>
<keyword id="KW-0812">Transmembrane</keyword>
<keyword id="KW-1133">Transmembrane helix</keyword>
<keyword id="KW-0813">Transport</keyword>
<gene>
    <name evidence="1" type="primary">dsbB1</name>
    <name type="ordered locus">Pfl01_4650</name>
</gene>
<proteinExistence type="inferred from homology"/>
<sequence>MSEETIRLGRERRYLVLLGIICLALIGGALYMQIVLGEAPCPLCILQRYALLLIALFAFIGAAMRTRRSITVFEVLVVICAIAGAGVAGHHVYTQFYPAVSCGIDVLQPIVDDLPLAKIFPLGFQVDGFCSTPYPPILGLSLAQWALVAFVLVVILVPLLTSRNRKALR</sequence>
<feature type="chain" id="PRO_0000298389" description="Disulfide bond formation protein B 1">
    <location>
        <begin position="1"/>
        <end position="169"/>
    </location>
</feature>
<feature type="topological domain" description="Cytoplasmic" evidence="1">
    <location>
        <begin position="1"/>
        <end position="14"/>
    </location>
</feature>
<feature type="transmembrane region" description="Helical" evidence="1">
    <location>
        <begin position="15"/>
        <end position="31"/>
    </location>
</feature>
<feature type="topological domain" description="Periplasmic" evidence="1">
    <location>
        <begin position="32"/>
        <end position="49"/>
    </location>
</feature>
<feature type="transmembrane region" description="Helical" evidence="1">
    <location>
        <begin position="50"/>
        <end position="64"/>
    </location>
</feature>
<feature type="topological domain" description="Cytoplasmic" evidence="1">
    <location>
        <begin position="65"/>
        <end position="71"/>
    </location>
</feature>
<feature type="transmembrane region" description="Helical" evidence="1">
    <location>
        <begin position="72"/>
        <end position="89"/>
    </location>
</feature>
<feature type="topological domain" description="Periplasmic" evidence="1">
    <location>
        <begin position="90"/>
        <end position="144"/>
    </location>
</feature>
<feature type="transmembrane region" description="Helical" evidence="1">
    <location>
        <begin position="145"/>
        <end position="163"/>
    </location>
</feature>
<feature type="topological domain" description="Cytoplasmic" evidence="1">
    <location>
        <begin position="164"/>
        <end position="169"/>
    </location>
</feature>
<feature type="disulfide bond" description="Redox-active" evidence="1">
    <location>
        <begin position="41"/>
        <end position="44"/>
    </location>
</feature>
<feature type="disulfide bond" description="Redox-active" evidence="1">
    <location>
        <begin position="102"/>
        <end position="130"/>
    </location>
</feature>
<evidence type="ECO:0000255" key="1">
    <source>
        <dbReference type="HAMAP-Rule" id="MF_00286"/>
    </source>
</evidence>
<accession>Q3K767</accession>